<keyword id="KW-0007">Acetylation</keyword>
<keyword id="KW-0963">Cytoplasm</keyword>
<keyword id="KW-0408">Iron</keyword>
<keyword id="KW-0411">Iron-sulfur</keyword>
<keyword id="KW-0479">Metal-binding</keyword>
<keyword id="KW-0597">Phosphoprotein</keyword>
<keyword id="KW-1185">Reference proteome</keyword>
<keyword id="KW-0677">Repeat</keyword>
<proteinExistence type="evidence at transcript level"/>
<accession>Q58DA7</accession>
<accession>A3KMZ2</accession>
<feature type="initiator methionine" description="Removed" evidence="1">
    <location>
        <position position="1"/>
    </location>
</feature>
<feature type="chain" id="PRO_0000239988" description="Glutaredoxin-3">
    <location>
        <begin position="2"/>
        <end position="334"/>
    </location>
</feature>
<feature type="domain" description="Thioredoxin" evidence="4">
    <location>
        <begin position="2"/>
        <end position="116"/>
    </location>
</feature>
<feature type="domain" description="Glutaredoxin 1" evidence="3">
    <location>
        <begin position="145"/>
        <end position="235"/>
    </location>
</feature>
<feature type="domain" description="Glutaredoxin 2" evidence="3">
    <location>
        <begin position="236"/>
        <end position="334"/>
    </location>
</feature>
<feature type="region of interest" description="Disordered" evidence="5">
    <location>
        <begin position="110"/>
        <end position="131"/>
    </location>
</feature>
<feature type="compositionally biased region" description="Low complexity" evidence="5">
    <location>
        <begin position="116"/>
        <end position="125"/>
    </location>
</feature>
<feature type="binding site" evidence="1">
    <location>
        <position position="158"/>
    </location>
    <ligand>
        <name>[2Fe-2S] cluster</name>
        <dbReference type="ChEBI" id="CHEBI:190135"/>
        <note>ligand shared between dimeric partners</note>
    </ligand>
</feature>
<feature type="binding site" evidence="1">
    <location>
        <position position="260"/>
    </location>
    <ligand>
        <name>[2Fe-2S] cluster</name>
        <dbReference type="ChEBI" id="CHEBI:190135"/>
        <note>ligand shared between dimeric partners</note>
    </ligand>
</feature>
<feature type="modified residue" description="N-acetylalanine" evidence="1">
    <location>
        <position position="2"/>
    </location>
</feature>
<feature type="modified residue" description="Phosphoserine" evidence="1">
    <location>
        <position position="116"/>
    </location>
</feature>
<feature type="modified residue" description="Phosphoserine" evidence="1">
    <location>
        <position position="119"/>
    </location>
</feature>
<feature type="sequence conflict" description="In Ref. 2; AAI33429." evidence="6" ref="2">
    <original>G</original>
    <variation>A</variation>
    <location>
        <position position="3"/>
    </location>
</feature>
<feature type="sequence conflict" description="In Ref. 2; AAI33429." evidence="6" ref="2">
    <original>S</original>
    <variation>A</variation>
    <location>
        <position position="18"/>
    </location>
</feature>
<feature type="sequence conflict" description="In Ref. 2; AAI33429." evidence="6" ref="2">
    <original>N</original>
    <variation>NQ</variation>
    <location>
        <position position="334"/>
    </location>
</feature>
<comment type="function">
    <text evidence="1 2">Together with BOLA2, acts as a cytosolic iron-sulfur (Fe-S) cluster assembly factor that facilitates [2Fe-2S] cluster insertion into a subset of cytosolic proteins (By similarity). Acts as a critical negative regulator of cardiac hypertrophy and a positive inotropic regulator (By similarity). Required for hemoglobin maturation. Does not possess any thyoredoxin activity since it lacks the conserved motif that is essential for catalytic activity (By similarity).</text>
</comment>
<comment type="subunit">
    <text evidence="1 2">Homodimer; the homodimer is independent of 2Fe-2S clusters. Heterotrimer; forms a heterotrimeric complex composed by two BOLA2 molecules and one GLRX3 molecule; linked by [2Fe-2S] clusters. Interacts (via N-terminus) with PRKCQ/PKC-theta (By similarity). Interacts (via C-terminus) with CSRP3 (By similarity). Interacts with CSRP2 (By similarity).</text>
</comment>
<comment type="subcellular location">
    <subcellularLocation>
        <location evidence="1">Cytoplasm</location>
        <location evidence="1">Cytosol</location>
    </subcellularLocation>
    <subcellularLocation>
        <location evidence="1">Cytoplasm</location>
        <location evidence="1">Cell cortex</location>
    </subcellularLocation>
    <subcellularLocation>
        <location evidence="2">Cytoplasm</location>
        <location evidence="2">Myofibril</location>
        <location evidence="2">Sarcomere</location>
        <location evidence="2">Z line</location>
    </subcellularLocation>
    <text evidence="2">Under the plasma membrane (By similarity). After PMA stimulation, GLRX3 and PRKCQ/PKC-theta translocate to a more extended submembrane area (By similarity). In the Z line, found associated with CSRP3 (By similarity).</text>
</comment>
<comment type="domain">
    <text>The thioredoxin domain lacks the two redox-active cysteines. This strongly suggests that it lacks thioredoxin activity.</text>
</comment>
<name>GLRX3_BOVIN</name>
<evidence type="ECO:0000250" key="1">
    <source>
        <dbReference type="UniProtKB" id="O76003"/>
    </source>
</evidence>
<evidence type="ECO:0000250" key="2">
    <source>
        <dbReference type="UniProtKB" id="Q9CQM9"/>
    </source>
</evidence>
<evidence type="ECO:0000255" key="3">
    <source>
        <dbReference type="PROSITE-ProRule" id="PRU00686"/>
    </source>
</evidence>
<evidence type="ECO:0000255" key="4">
    <source>
        <dbReference type="PROSITE-ProRule" id="PRU00691"/>
    </source>
</evidence>
<evidence type="ECO:0000256" key="5">
    <source>
        <dbReference type="SAM" id="MobiDB-lite"/>
    </source>
</evidence>
<evidence type="ECO:0000305" key="6"/>
<gene>
    <name type="primary">GLRX3</name>
    <name type="synonym">TXNL2</name>
</gene>
<organism>
    <name type="scientific">Bos taurus</name>
    <name type="common">Bovine</name>
    <dbReference type="NCBI Taxonomy" id="9913"/>
    <lineage>
        <taxon>Eukaryota</taxon>
        <taxon>Metazoa</taxon>
        <taxon>Chordata</taxon>
        <taxon>Craniata</taxon>
        <taxon>Vertebrata</taxon>
        <taxon>Euteleostomi</taxon>
        <taxon>Mammalia</taxon>
        <taxon>Eutheria</taxon>
        <taxon>Laurasiatheria</taxon>
        <taxon>Artiodactyla</taxon>
        <taxon>Ruminantia</taxon>
        <taxon>Pecora</taxon>
        <taxon>Bovidae</taxon>
        <taxon>Bovinae</taxon>
        <taxon>Bos</taxon>
    </lineage>
</organism>
<reference key="1">
    <citation type="journal article" date="2005" name="BMC Genomics">
        <title>Characterization of 954 bovine full-CDS cDNA sequences.</title>
        <authorList>
            <person name="Harhay G.P."/>
            <person name="Sonstegard T.S."/>
            <person name="Keele J.W."/>
            <person name="Heaton M.P."/>
            <person name="Clawson M.L."/>
            <person name="Snelling W.M."/>
            <person name="Wiedmann R.T."/>
            <person name="Van Tassell C.P."/>
            <person name="Smith T.P.L."/>
        </authorList>
    </citation>
    <scope>NUCLEOTIDE SEQUENCE [LARGE SCALE MRNA]</scope>
</reference>
<reference key="2">
    <citation type="submission" date="2007-02" db="EMBL/GenBank/DDBJ databases">
        <authorList>
            <consortium name="NIH - Mammalian Gene Collection (MGC) project"/>
        </authorList>
    </citation>
    <scope>NUCLEOTIDE SEQUENCE [LARGE SCALE MRNA]</scope>
    <source>
        <strain>Crossbred X Angus</strain>
        <tissue>Liver</tissue>
    </source>
</reference>
<sequence>MAGGAAEAAAAVVEVGSSGQFEELLRLRAKSLLVVHFWAPWAPQCAQMNDVMAELAKEHQQVSFVKLEAEAVPEVSEKYEISSVPTFLFFKNSQKIDRLDGAHAPELTKKVQRHASSGSFSPSGSEHPKEDLSLRLKKLTHAAPCMLFMKGTPQEPRCGFSKQMVEILNKHNIQFSSFDIFSDEEVRQGLKTYSSWPTYPQLYVSGELIGGLDIIKELEASKELDTICPKAPKLEERLKVLTNKASVMLFMKGNKQEAKCGFSRQILEILNSTGIEYETFDILEDEEVRQGLKAYSNWPTYPQLYVKGELVGGLDIVKELKENGELLPILKGEN</sequence>
<dbReference type="EMBL" id="BT021690">
    <property type="protein sequence ID" value="AAX46537.1"/>
    <property type="molecule type" value="mRNA"/>
</dbReference>
<dbReference type="EMBL" id="BC133428">
    <property type="protein sequence ID" value="AAI33429.1"/>
    <property type="molecule type" value="mRNA"/>
</dbReference>
<dbReference type="RefSeq" id="NP_001030273.1">
    <property type="nucleotide sequence ID" value="NM_001035101.1"/>
</dbReference>
<dbReference type="SMR" id="Q58DA7"/>
<dbReference type="FunCoup" id="Q58DA7">
    <property type="interactions" value="3842"/>
</dbReference>
<dbReference type="STRING" id="9913.ENSBTAP00000006613"/>
<dbReference type="PaxDb" id="9913-ENSBTAP00000006613"/>
<dbReference type="PeptideAtlas" id="Q58DA7"/>
<dbReference type="GeneID" id="511528"/>
<dbReference type="KEGG" id="bta:511528"/>
<dbReference type="CTD" id="10539"/>
<dbReference type="eggNOG" id="KOG0911">
    <property type="taxonomic scope" value="Eukaryota"/>
</dbReference>
<dbReference type="InParanoid" id="Q58DA7"/>
<dbReference type="OrthoDB" id="415696at2759"/>
<dbReference type="Proteomes" id="UP000009136">
    <property type="component" value="Unplaced"/>
</dbReference>
<dbReference type="GO" id="GO:0005938">
    <property type="term" value="C:cell cortex"/>
    <property type="evidence" value="ECO:0007669"/>
    <property type="project" value="UniProtKB-SubCell"/>
</dbReference>
<dbReference type="GO" id="GO:0005829">
    <property type="term" value="C:cytosol"/>
    <property type="evidence" value="ECO:0000318"/>
    <property type="project" value="GO_Central"/>
</dbReference>
<dbReference type="GO" id="GO:0005634">
    <property type="term" value="C:nucleus"/>
    <property type="evidence" value="ECO:0000318"/>
    <property type="project" value="GO_Central"/>
</dbReference>
<dbReference type="GO" id="GO:0030018">
    <property type="term" value="C:Z disc"/>
    <property type="evidence" value="ECO:0007669"/>
    <property type="project" value="UniProtKB-SubCell"/>
</dbReference>
<dbReference type="GO" id="GO:0051536">
    <property type="term" value="F:iron-sulfur cluster binding"/>
    <property type="evidence" value="ECO:0007669"/>
    <property type="project" value="UniProtKB-KW"/>
</dbReference>
<dbReference type="GO" id="GO:0046872">
    <property type="term" value="F:metal ion binding"/>
    <property type="evidence" value="ECO:0007669"/>
    <property type="project" value="UniProtKB-KW"/>
</dbReference>
<dbReference type="GO" id="GO:0006879">
    <property type="term" value="P:intracellular iron ion homeostasis"/>
    <property type="evidence" value="ECO:0000318"/>
    <property type="project" value="GO_Central"/>
</dbReference>
<dbReference type="GO" id="GO:0010614">
    <property type="term" value="P:negative regulation of cardiac muscle hypertrophy"/>
    <property type="evidence" value="ECO:0000250"/>
    <property type="project" value="UniProtKB"/>
</dbReference>
<dbReference type="GO" id="GO:0002026">
    <property type="term" value="P:regulation of the force of heart contraction"/>
    <property type="evidence" value="ECO:0000250"/>
    <property type="project" value="UniProtKB"/>
</dbReference>
<dbReference type="CDD" id="cd03028">
    <property type="entry name" value="GRX_PICOT_like"/>
    <property type="match status" value="2"/>
</dbReference>
<dbReference type="CDD" id="cd02984">
    <property type="entry name" value="TRX_PICOT"/>
    <property type="match status" value="1"/>
</dbReference>
<dbReference type="FunFam" id="3.40.30.10:FF:000090">
    <property type="entry name" value="Glutaredoxin-3"/>
    <property type="match status" value="1"/>
</dbReference>
<dbReference type="FunFam" id="3.40.30.10:FF:000165">
    <property type="entry name" value="glutaredoxin-3 isoform X1"/>
    <property type="match status" value="1"/>
</dbReference>
<dbReference type="FunFam" id="3.40.30.10:FF:000012">
    <property type="entry name" value="Monothiol glutaredoxin"/>
    <property type="match status" value="1"/>
</dbReference>
<dbReference type="Gene3D" id="3.40.30.10">
    <property type="entry name" value="Glutaredoxin"/>
    <property type="match status" value="3"/>
</dbReference>
<dbReference type="InterPro" id="IPR002109">
    <property type="entry name" value="Glutaredoxin"/>
</dbReference>
<dbReference type="InterPro" id="IPR033658">
    <property type="entry name" value="GRX_PICOT-like"/>
</dbReference>
<dbReference type="InterPro" id="IPR004480">
    <property type="entry name" value="Monothiol_GRX-rel"/>
</dbReference>
<dbReference type="InterPro" id="IPR036249">
    <property type="entry name" value="Thioredoxin-like_sf"/>
</dbReference>
<dbReference type="InterPro" id="IPR013766">
    <property type="entry name" value="Thioredoxin_domain"/>
</dbReference>
<dbReference type="NCBIfam" id="TIGR00365">
    <property type="entry name" value="Grx4 family monothiol glutaredoxin"/>
    <property type="match status" value="1"/>
</dbReference>
<dbReference type="PANTHER" id="PTHR10293">
    <property type="entry name" value="GLUTAREDOXIN FAMILY MEMBER"/>
    <property type="match status" value="1"/>
</dbReference>
<dbReference type="PANTHER" id="PTHR10293:SF73">
    <property type="entry name" value="GLUTAREDOXIN-3"/>
    <property type="match status" value="1"/>
</dbReference>
<dbReference type="Pfam" id="PF00462">
    <property type="entry name" value="Glutaredoxin"/>
    <property type="match status" value="2"/>
</dbReference>
<dbReference type="Pfam" id="PF00085">
    <property type="entry name" value="Thioredoxin"/>
    <property type="match status" value="1"/>
</dbReference>
<dbReference type="SUPFAM" id="SSF52833">
    <property type="entry name" value="Thioredoxin-like"/>
    <property type="match status" value="3"/>
</dbReference>
<dbReference type="PROSITE" id="PS51354">
    <property type="entry name" value="GLUTAREDOXIN_2"/>
    <property type="match status" value="2"/>
</dbReference>
<dbReference type="PROSITE" id="PS51352">
    <property type="entry name" value="THIOREDOXIN_2"/>
    <property type="match status" value="1"/>
</dbReference>
<protein>
    <recommendedName>
        <fullName>Glutaredoxin-3</fullName>
    </recommendedName>
    <alternativeName>
        <fullName>PKC-interacting cousin of thioredoxin</fullName>
        <shortName>PICOT</shortName>
    </alternativeName>
    <alternativeName>
        <fullName>Thioredoxin-like protein 2</fullName>
    </alternativeName>
</protein>